<feature type="chain" id="PRO_1000076859" description="Pantothenate synthetase">
    <location>
        <begin position="1"/>
        <end position="289"/>
    </location>
</feature>
<feature type="active site" description="Proton donor" evidence="1">
    <location>
        <position position="37"/>
    </location>
</feature>
<feature type="binding site" evidence="1">
    <location>
        <begin position="30"/>
        <end position="37"/>
    </location>
    <ligand>
        <name>ATP</name>
        <dbReference type="ChEBI" id="CHEBI:30616"/>
    </ligand>
</feature>
<feature type="binding site" evidence="1">
    <location>
        <position position="61"/>
    </location>
    <ligand>
        <name>(R)-pantoate</name>
        <dbReference type="ChEBI" id="CHEBI:15980"/>
    </ligand>
</feature>
<feature type="binding site" evidence="1">
    <location>
        <position position="61"/>
    </location>
    <ligand>
        <name>beta-alanine</name>
        <dbReference type="ChEBI" id="CHEBI:57966"/>
    </ligand>
</feature>
<feature type="binding site" evidence="1">
    <location>
        <begin position="147"/>
        <end position="150"/>
    </location>
    <ligand>
        <name>ATP</name>
        <dbReference type="ChEBI" id="CHEBI:30616"/>
    </ligand>
</feature>
<feature type="binding site" evidence="1">
    <location>
        <position position="153"/>
    </location>
    <ligand>
        <name>(R)-pantoate</name>
        <dbReference type="ChEBI" id="CHEBI:15980"/>
    </ligand>
</feature>
<feature type="binding site" evidence="1">
    <location>
        <position position="176"/>
    </location>
    <ligand>
        <name>ATP</name>
        <dbReference type="ChEBI" id="CHEBI:30616"/>
    </ligand>
</feature>
<feature type="binding site" evidence="1">
    <location>
        <begin position="184"/>
        <end position="187"/>
    </location>
    <ligand>
        <name>ATP</name>
        <dbReference type="ChEBI" id="CHEBI:30616"/>
    </ligand>
</feature>
<evidence type="ECO:0000255" key="1">
    <source>
        <dbReference type="HAMAP-Rule" id="MF_00158"/>
    </source>
</evidence>
<proteinExistence type="inferred from homology"/>
<accession>A6WW03</accession>
<gene>
    <name evidence="1" type="primary">panC</name>
    <name type="ordered locus">Oant_0426</name>
</gene>
<organism>
    <name type="scientific">Brucella anthropi (strain ATCC 49188 / DSM 6882 / CCUG 24695 / JCM 21032 / LMG 3331 / NBRC 15819 / NCTC 12168 / Alc 37)</name>
    <name type="common">Ochrobactrum anthropi</name>
    <dbReference type="NCBI Taxonomy" id="439375"/>
    <lineage>
        <taxon>Bacteria</taxon>
        <taxon>Pseudomonadati</taxon>
        <taxon>Pseudomonadota</taxon>
        <taxon>Alphaproteobacteria</taxon>
        <taxon>Hyphomicrobiales</taxon>
        <taxon>Brucellaceae</taxon>
        <taxon>Brucella/Ochrobactrum group</taxon>
        <taxon>Brucella</taxon>
    </lineage>
</organism>
<name>PANC_BRUA4</name>
<comment type="function">
    <text evidence="1">Catalyzes the condensation of pantoate with beta-alanine in an ATP-dependent reaction via a pantoyl-adenylate intermediate.</text>
</comment>
<comment type="catalytic activity">
    <reaction evidence="1">
        <text>(R)-pantoate + beta-alanine + ATP = (R)-pantothenate + AMP + diphosphate + H(+)</text>
        <dbReference type="Rhea" id="RHEA:10912"/>
        <dbReference type="ChEBI" id="CHEBI:15378"/>
        <dbReference type="ChEBI" id="CHEBI:15980"/>
        <dbReference type="ChEBI" id="CHEBI:29032"/>
        <dbReference type="ChEBI" id="CHEBI:30616"/>
        <dbReference type="ChEBI" id="CHEBI:33019"/>
        <dbReference type="ChEBI" id="CHEBI:57966"/>
        <dbReference type="ChEBI" id="CHEBI:456215"/>
        <dbReference type="EC" id="6.3.2.1"/>
    </reaction>
</comment>
<comment type="pathway">
    <text evidence="1">Cofactor biosynthesis; (R)-pantothenate biosynthesis; (R)-pantothenate from (R)-pantoate and beta-alanine: step 1/1.</text>
</comment>
<comment type="subunit">
    <text evidence="1">Homodimer.</text>
</comment>
<comment type="subcellular location">
    <subcellularLocation>
        <location evidence="1">Cytoplasm</location>
    </subcellularLocation>
</comment>
<comment type="miscellaneous">
    <text evidence="1">The reaction proceeds by a bi uni uni bi ping pong mechanism.</text>
</comment>
<comment type="similarity">
    <text evidence="1">Belongs to the pantothenate synthetase family.</text>
</comment>
<sequence>MQIIRTIEELRQILAPARRAGKRIGFVPTMGYLHKGHLELVHRSRAENDVTVVSIFVNPLQFGANEDLDKYPRDLERDAALLHRADVDYLFAPAVSDMYPQPMQTVVDVPTLGNQMEGEARPGHFAGVATVVNKLFNIVGADAAYFGEKDFQQLVIIRRMVEDMAIPVRVVGVETVREEDGLACSSRNVYLSPEQRAAAIIVPKALDEAERLYRSGVDDPDALEAAIRTFIATEPLATPEVVALRDPETLERLTAVQGRPVLVALFVRLGTTRLLDNRVIAHVAQEQAA</sequence>
<dbReference type="EC" id="6.3.2.1" evidence="1"/>
<dbReference type="EMBL" id="CP000758">
    <property type="protein sequence ID" value="ABS13157.1"/>
    <property type="molecule type" value="Genomic_DNA"/>
</dbReference>
<dbReference type="RefSeq" id="WP_012090718.1">
    <property type="nucleotide sequence ID" value="NC_009667.1"/>
</dbReference>
<dbReference type="SMR" id="A6WW03"/>
<dbReference type="STRING" id="439375.Oant_0426"/>
<dbReference type="KEGG" id="oan:Oant_0426"/>
<dbReference type="PATRIC" id="fig|439375.7.peg.453"/>
<dbReference type="eggNOG" id="COG0414">
    <property type="taxonomic scope" value="Bacteria"/>
</dbReference>
<dbReference type="HOGENOM" id="CLU_047148_0_0_5"/>
<dbReference type="PhylomeDB" id="A6WW03"/>
<dbReference type="UniPathway" id="UPA00028">
    <property type="reaction ID" value="UER00005"/>
</dbReference>
<dbReference type="Proteomes" id="UP000002301">
    <property type="component" value="Chromosome 1"/>
</dbReference>
<dbReference type="GO" id="GO:0005829">
    <property type="term" value="C:cytosol"/>
    <property type="evidence" value="ECO:0007669"/>
    <property type="project" value="TreeGrafter"/>
</dbReference>
<dbReference type="GO" id="GO:0005524">
    <property type="term" value="F:ATP binding"/>
    <property type="evidence" value="ECO:0007669"/>
    <property type="project" value="UniProtKB-KW"/>
</dbReference>
<dbReference type="GO" id="GO:0004592">
    <property type="term" value="F:pantoate-beta-alanine ligase activity"/>
    <property type="evidence" value="ECO:0007669"/>
    <property type="project" value="UniProtKB-UniRule"/>
</dbReference>
<dbReference type="GO" id="GO:0015940">
    <property type="term" value="P:pantothenate biosynthetic process"/>
    <property type="evidence" value="ECO:0007669"/>
    <property type="project" value="UniProtKB-UniRule"/>
</dbReference>
<dbReference type="CDD" id="cd00560">
    <property type="entry name" value="PanC"/>
    <property type="match status" value="1"/>
</dbReference>
<dbReference type="FunFam" id="3.40.50.620:FF:000013">
    <property type="entry name" value="Pantothenate synthetase"/>
    <property type="match status" value="1"/>
</dbReference>
<dbReference type="Gene3D" id="3.40.50.620">
    <property type="entry name" value="HUPs"/>
    <property type="match status" value="1"/>
</dbReference>
<dbReference type="Gene3D" id="3.30.1300.10">
    <property type="entry name" value="Pantoate-beta-alanine ligase, C-terminal domain"/>
    <property type="match status" value="1"/>
</dbReference>
<dbReference type="HAMAP" id="MF_00158">
    <property type="entry name" value="PanC"/>
    <property type="match status" value="1"/>
</dbReference>
<dbReference type="InterPro" id="IPR004821">
    <property type="entry name" value="Cyt_trans-like"/>
</dbReference>
<dbReference type="InterPro" id="IPR003721">
    <property type="entry name" value="Pantoate_ligase"/>
</dbReference>
<dbReference type="InterPro" id="IPR042176">
    <property type="entry name" value="Pantoate_ligase_C"/>
</dbReference>
<dbReference type="InterPro" id="IPR014729">
    <property type="entry name" value="Rossmann-like_a/b/a_fold"/>
</dbReference>
<dbReference type="NCBIfam" id="TIGR00125">
    <property type="entry name" value="cyt_tran_rel"/>
    <property type="match status" value="1"/>
</dbReference>
<dbReference type="NCBIfam" id="TIGR00018">
    <property type="entry name" value="panC"/>
    <property type="match status" value="1"/>
</dbReference>
<dbReference type="PANTHER" id="PTHR21299">
    <property type="entry name" value="CYTIDYLATE KINASE/PANTOATE-BETA-ALANINE LIGASE"/>
    <property type="match status" value="1"/>
</dbReference>
<dbReference type="PANTHER" id="PTHR21299:SF1">
    <property type="entry name" value="PANTOATE--BETA-ALANINE LIGASE"/>
    <property type="match status" value="1"/>
</dbReference>
<dbReference type="Pfam" id="PF02569">
    <property type="entry name" value="Pantoate_ligase"/>
    <property type="match status" value="1"/>
</dbReference>
<dbReference type="SUPFAM" id="SSF52374">
    <property type="entry name" value="Nucleotidylyl transferase"/>
    <property type="match status" value="1"/>
</dbReference>
<keyword id="KW-0067">ATP-binding</keyword>
<keyword id="KW-0963">Cytoplasm</keyword>
<keyword id="KW-0436">Ligase</keyword>
<keyword id="KW-0547">Nucleotide-binding</keyword>
<keyword id="KW-0566">Pantothenate biosynthesis</keyword>
<keyword id="KW-1185">Reference proteome</keyword>
<protein>
    <recommendedName>
        <fullName evidence="1">Pantothenate synthetase</fullName>
        <shortName evidence="1">PS</shortName>
        <ecNumber evidence="1">6.3.2.1</ecNumber>
    </recommendedName>
    <alternativeName>
        <fullName evidence="1">Pantoate--beta-alanine ligase</fullName>
    </alternativeName>
    <alternativeName>
        <fullName evidence="1">Pantoate-activating enzyme</fullName>
    </alternativeName>
</protein>
<reference key="1">
    <citation type="journal article" date="2011" name="J. Bacteriol.">
        <title>Genome of Ochrobactrum anthropi ATCC 49188 T, a versatile opportunistic pathogen and symbiont of several eukaryotic hosts.</title>
        <authorList>
            <person name="Chain P.S."/>
            <person name="Lang D.M."/>
            <person name="Comerci D.J."/>
            <person name="Malfatti S.A."/>
            <person name="Vergez L.M."/>
            <person name="Shin M."/>
            <person name="Ugalde R.A."/>
            <person name="Garcia E."/>
            <person name="Tolmasky M.E."/>
        </authorList>
    </citation>
    <scope>NUCLEOTIDE SEQUENCE [LARGE SCALE GENOMIC DNA]</scope>
    <source>
        <strain>ATCC 49188 / DSM 6882 / CCUG 24695 / JCM 21032 / LMG 3331 / NBRC 15819 / NCTC 12168 / Alc 37</strain>
    </source>
</reference>